<keyword id="KW-0687">Ribonucleoprotein</keyword>
<keyword id="KW-0689">Ribosomal protein</keyword>
<organism>
    <name type="scientific">Streptococcus pyogenes serotype M2 (strain MGAS10270)</name>
    <dbReference type="NCBI Taxonomy" id="370552"/>
    <lineage>
        <taxon>Bacteria</taxon>
        <taxon>Bacillati</taxon>
        <taxon>Bacillota</taxon>
        <taxon>Bacilli</taxon>
        <taxon>Lactobacillales</taxon>
        <taxon>Streptococcaceae</taxon>
        <taxon>Streptococcus</taxon>
    </lineage>
</organism>
<evidence type="ECO:0000255" key="1">
    <source>
        <dbReference type="HAMAP-Rule" id="MF_01371"/>
    </source>
</evidence>
<evidence type="ECO:0000305" key="2"/>
<proteinExistence type="inferred from homology"/>
<dbReference type="EMBL" id="CP000260">
    <property type="protein sequence ID" value="ABF33129.1"/>
    <property type="molecule type" value="Genomic_DNA"/>
</dbReference>
<dbReference type="RefSeq" id="WP_002986624.1">
    <property type="nucleotide sequence ID" value="NZ_CVUH01000001.1"/>
</dbReference>
<dbReference type="SMR" id="Q1JJ44"/>
<dbReference type="GeneID" id="69900044"/>
<dbReference type="KEGG" id="sph:MGAS10270_Spy0064"/>
<dbReference type="HOGENOM" id="CLU_131047_2_1_9"/>
<dbReference type="Proteomes" id="UP000002436">
    <property type="component" value="Chromosome"/>
</dbReference>
<dbReference type="GO" id="GO:0022625">
    <property type="term" value="C:cytosolic large ribosomal subunit"/>
    <property type="evidence" value="ECO:0007669"/>
    <property type="project" value="TreeGrafter"/>
</dbReference>
<dbReference type="GO" id="GO:0003735">
    <property type="term" value="F:structural constituent of ribosome"/>
    <property type="evidence" value="ECO:0007669"/>
    <property type="project" value="InterPro"/>
</dbReference>
<dbReference type="GO" id="GO:0006412">
    <property type="term" value="P:translation"/>
    <property type="evidence" value="ECO:0007669"/>
    <property type="project" value="UniProtKB-UniRule"/>
</dbReference>
<dbReference type="CDD" id="cd01658">
    <property type="entry name" value="Ribosomal_L30"/>
    <property type="match status" value="1"/>
</dbReference>
<dbReference type="FunFam" id="3.30.1390.20:FF:000001">
    <property type="entry name" value="50S ribosomal protein L30"/>
    <property type="match status" value="1"/>
</dbReference>
<dbReference type="Gene3D" id="3.30.1390.20">
    <property type="entry name" value="Ribosomal protein L30, ferredoxin-like fold domain"/>
    <property type="match status" value="1"/>
</dbReference>
<dbReference type="HAMAP" id="MF_01371_B">
    <property type="entry name" value="Ribosomal_uL30_B"/>
    <property type="match status" value="1"/>
</dbReference>
<dbReference type="InterPro" id="IPR036919">
    <property type="entry name" value="Ribo_uL30_ferredoxin-like_sf"/>
</dbReference>
<dbReference type="InterPro" id="IPR005996">
    <property type="entry name" value="Ribosomal_uL30_bac-type"/>
</dbReference>
<dbReference type="InterPro" id="IPR018038">
    <property type="entry name" value="Ribosomal_uL30_CS"/>
</dbReference>
<dbReference type="InterPro" id="IPR016082">
    <property type="entry name" value="Ribosomal_uL30_ferredoxin-like"/>
</dbReference>
<dbReference type="NCBIfam" id="TIGR01308">
    <property type="entry name" value="rpmD_bact"/>
    <property type="match status" value="1"/>
</dbReference>
<dbReference type="PANTHER" id="PTHR15892:SF2">
    <property type="entry name" value="LARGE RIBOSOMAL SUBUNIT PROTEIN UL30M"/>
    <property type="match status" value="1"/>
</dbReference>
<dbReference type="PANTHER" id="PTHR15892">
    <property type="entry name" value="MITOCHONDRIAL RIBOSOMAL PROTEIN L30"/>
    <property type="match status" value="1"/>
</dbReference>
<dbReference type="Pfam" id="PF00327">
    <property type="entry name" value="Ribosomal_L30"/>
    <property type="match status" value="1"/>
</dbReference>
<dbReference type="PIRSF" id="PIRSF002211">
    <property type="entry name" value="Ribosomal_L30_bac-type"/>
    <property type="match status" value="1"/>
</dbReference>
<dbReference type="SUPFAM" id="SSF55129">
    <property type="entry name" value="Ribosomal protein L30p/L7e"/>
    <property type="match status" value="1"/>
</dbReference>
<dbReference type="PROSITE" id="PS00634">
    <property type="entry name" value="RIBOSOMAL_L30"/>
    <property type="match status" value="1"/>
</dbReference>
<feature type="chain" id="PRO_0000273872" description="Large ribosomal subunit protein uL30">
    <location>
        <begin position="1"/>
        <end position="60"/>
    </location>
</feature>
<protein>
    <recommendedName>
        <fullName evidence="1">Large ribosomal subunit protein uL30</fullName>
    </recommendedName>
    <alternativeName>
        <fullName evidence="2">50S ribosomal protein L30</fullName>
    </alternativeName>
</protein>
<name>RL30_STRPD</name>
<gene>
    <name evidence="1" type="primary">rpmD</name>
    <name type="ordered locus">MGAS10270_Spy0064</name>
</gene>
<sequence>MAQIKITLTKSPIGRKPEQRKTVVALGLGKLNSSVVKEDNAAIRGMVTAISHLVTVEDVK</sequence>
<accession>Q1JJ44</accession>
<reference key="1">
    <citation type="journal article" date="2006" name="Proc. Natl. Acad. Sci. U.S.A.">
        <title>Molecular genetic anatomy of inter- and intraserotype variation in the human bacterial pathogen group A Streptococcus.</title>
        <authorList>
            <person name="Beres S.B."/>
            <person name="Richter E.W."/>
            <person name="Nagiec M.J."/>
            <person name="Sumby P."/>
            <person name="Porcella S.F."/>
            <person name="DeLeo F.R."/>
            <person name="Musser J.M."/>
        </authorList>
    </citation>
    <scope>NUCLEOTIDE SEQUENCE [LARGE SCALE GENOMIC DNA]</scope>
    <source>
        <strain>MGAS10270</strain>
    </source>
</reference>
<comment type="subunit">
    <text evidence="1">Part of the 50S ribosomal subunit.</text>
</comment>
<comment type="similarity">
    <text evidence="1">Belongs to the universal ribosomal protein uL30 family.</text>
</comment>